<name>Y973_STAAC</name>
<organism>
    <name type="scientific">Staphylococcus aureus (strain COL)</name>
    <dbReference type="NCBI Taxonomy" id="93062"/>
    <lineage>
        <taxon>Bacteria</taxon>
        <taxon>Bacillati</taxon>
        <taxon>Bacillota</taxon>
        <taxon>Bacilli</taxon>
        <taxon>Bacillales</taxon>
        <taxon>Staphylococcaceae</taxon>
        <taxon>Staphylococcus</taxon>
    </lineage>
</organism>
<dbReference type="EMBL" id="CP000046">
    <property type="protein sequence ID" value="AAW37940.1"/>
    <property type="molecule type" value="Genomic_DNA"/>
</dbReference>
<dbReference type="RefSeq" id="WP_000670752.1">
    <property type="nucleotide sequence ID" value="NZ_JBGOFO010000002.1"/>
</dbReference>
<dbReference type="SMR" id="Q5HHB6"/>
<dbReference type="KEGG" id="sac:SACOL0973"/>
<dbReference type="HOGENOM" id="CLU_028458_3_1_9"/>
<dbReference type="Proteomes" id="UP000000530">
    <property type="component" value="Chromosome"/>
</dbReference>
<dbReference type="GO" id="GO:0018773">
    <property type="term" value="F:acetylpyruvate hydrolase activity"/>
    <property type="evidence" value="ECO:0007669"/>
    <property type="project" value="TreeGrafter"/>
</dbReference>
<dbReference type="GO" id="GO:0046872">
    <property type="term" value="F:metal ion binding"/>
    <property type="evidence" value="ECO:0007669"/>
    <property type="project" value="UniProtKB-KW"/>
</dbReference>
<dbReference type="FunFam" id="3.90.850.10:FF:000010">
    <property type="entry name" value="FAA hydrolase family protein"/>
    <property type="match status" value="1"/>
</dbReference>
<dbReference type="Gene3D" id="3.90.850.10">
    <property type="entry name" value="Fumarylacetoacetase-like, C-terminal domain"/>
    <property type="match status" value="1"/>
</dbReference>
<dbReference type="InterPro" id="IPR011234">
    <property type="entry name" value="Fumarylacetoacetase-like_C"/>
</dbReference>
<dbReference type="InterPro" id="IPR036663">
    <property type="entry name" value="Fumarylacetoacetase_C_sf"/>
</dbReference>
<dbReference type="PANTHER" id="PTHR11820">
    <property type="entry name" value="ACYLPYRUVASE"/>
    <property type="match status" value="1"/>
</dbReference>
<dbReference type="PANTHER" id="PTHR11820:SF7">
    <property type="entry name" value="ACYLPYRUVASE FAHD1, MITOCHONDRIAL"/>
    <property type="match status" value="1"/>
</dbReference>
<dbReference type="Pfam" id="PF01557">
    <property type="entry name" value="FAA_hydrolase"/>
    <property type="match status" value="1"/>
</dbReference>
<dbReference type="SUPFAM" id="SSF56529">
    <property type="entry name" value="FAH"/>
    <property type="match status" value="1"/>
</dbReference>
<comment type="similarity">
    <text evidence="2">Belongs to the FAH family.</text>
</comment>
<accession>Q5HHB6</accession>
<proteinExistence type="inferred from homology"/>
<feature type="chain" id="PRO_0000303218" description="Uncharacterized protein SACOL0973">
    <location>
        <begin position="1"/>
        <end position="300"/>
    </location>
</feature>
<feature type="binding site" evidence="1">
    <location>
        <position position="146"/>
    </location>
    <ligand>
        <name>a divalent metal cation</name>
        <dbReference type="ChEBI" id="CHEBI:60240"/>
    </ligand>
</feature>
<feature type="binding site" evidence="1">
    <location>
        <position position="148"/>
    </location>
    <ligand>
        <name>a divalent metal cation</name>
        <dbReference type="ChEBI" id="CHEBI:60240"/>
    </ligand>
</feature>
<feature type="binding site" evidence="1">
    <location>
        <position position="177"/>
    </location>
    <ligand>
        <name>a divalent metal cation</name>
        <dbReference type="ChEBI" id="CHEBI:60240"/>
    </ligand>
</feature>
<keyword id="KW-0479">Metal-binding</keyword>
<reference key="1">
    <citation type="journal article" date="2005" name="J. Bacteriol.">
        <title>Insights on evolution of virulence and resistance from the complete genome analysis of an early methicillin-resistant Staphylococcus aureus strain and a biofilm-producing methicillin-resistant Staphylococcus epidermidis strain.</title>
        <authorList>
            <person name="Gill S.R."/>
            <person name="Fouts D.E."/>
            <person name="Archer G.L."/>
            <person name="Mongodin E.F."/>
            <person name="DeBoy R.T."/>
            <person name="Ravel J."/>
            <person name="Paulsen I.T."/>
            <person name="Kolonay J.F."/>
            <person name="Brinkac L.M."/>
            <person name="Beanan M.J."/>
            <person name="Dodson R.J."/>
            <person name="Daugherty S.C."/>
            <person name="Madupu R."/>
            <person name="Angiuoli S.V."/>
            <person name="Durkin A.S."/>
            <person name="Haft D.H."/>
            <person name="Vamathevan J.J."/>
            <person name="Khouri H."/>
            <person name="Utterback T.R."/>
            <person name="Lee C."/>
            <person name="Dimitrov G."/>
            <person name="Jiang L."/>
            <person name="Qin H."/>
            <person name="Weidman J."/>
            <person name="Tran K."/>
            <person name="Kang K.H."/>
            <person name="Hance I.R."/>
            <person name="Nelson K.E."/>
            <person name="Fraser C.M."/>
        </authorList>
    </citation>
    <scope>NUCLEOTIDE SEQUENCE [LARGE SCALE GENOMIC DNA]</scope>
    <source>
        <strain>COL</strain>
    </source>
</reference>
<protein>
    <recommendedName>
        <fullName>Uncharacterized protein SACOL0973</fullName>
    </recommendedName>
</protein>
<gene>
    <name type="ordered locus">SACOL0973</name>
</gene>
<evidence type="ECO:0000250" key="1"/>
<evidence type="ECO:0000305" key="2"/>
<sequence>MKFLSFKYNDKTSYGVKVKREDAVWDLTQVFADFAEGDFHPKTLLAGLQQNHTLDFQEQVRKAVVAAEDSGKAEDYKISFNDIEFLPPVTPPNNVIAFGRNYKDHANELNHEVEKLYVFTKAASSLTGDNATIPNHKDITDQLDYEGELGIVIGKSGEKIPKALALDYVYGYTIINDITDRKAQSEQDQAFLSKSLTGGCPMGPYIVTKDELPLPENVNIVTKVNNEIRQDGNTGEMILKIDELIEEISKYVALHPGDIIATGTPAGVGAGMQPPKFLQPGDEVKVTIDNIGTLTTYIAK</sequence>